<reference key="1">
    <citation type="journal article" date="2009" name="J. Bacteriol.">
        <title>The genome of Thermosipho africanus TCF52B: lateral genetic connections to the Firmicutes and Archaea.</title>
        <authorList>
            <person name="Nesboe C.L."/>
            <person name="Bapteste E."/>
            <person name="Curtis B."/>
            <person name="Dahle H."/>
            <person name="Lopez P."/>
            <person name="Macleod D."/>
            <person name="Dlutek M."/>
            <person name="Bowman S."/>
            <person name="Zhaxybayeva O."/>
            <person name="Birkeland N.-K."/>
            <person name="Doolittle W.F."/>
        </authorList>
    </citation>
    <scope>NUCLEOTIDE SEQUENCE [LARGE SCALE GENOMIC DNA]</scope>
    <source>
        <strain>TCF52B</strain>
    </source>
</reference>
<dbReference type="EC" id="4.1.1.50" evidence="1"/>
<dbReference type="EMBL" id="CP001185">
    <property type="protein sequence ID" value="ACJ75848.1"/>
    <property type="molecule type" value="Genomic_DNA"/>
</dbReference>
<dbReference type="SMR" id="B7ICX1"/>
<dbReference type="STRING" id="484019.THA_1404"/>
<dbReference type="KEGG" id="taf:THA_1404"/>
<dbReference type="eggNOG" id="COG1586">
    <property type="taxonomic scope" value="Bacteria"/>
</dbReference>
<dbReference type="HOGENOM" id="CLU_125470_2_3_0"/>
<dbReference type="OrthoDB" id="9793120at2"/>
<dbReference type="UniPathway" id="UPA00331">
    <property type="reaction ID" value="UER00451"/>
</dbReference>
<dbReference type="Proteomes" id="UP000002453">
    <property type="component" value="Chromosome"/>
</dbReference>
<dbReference type="GO" id="GO:0005829">
    <property type="term" value="C:cytosol"/>
    <property type="evidence" value="ECO:0007669"/>
    <property type="project" value="TreeGrafter"/>
</dbReference>
<dbReference type="GO" id="GO:0004014">
    <property type="term" value="F:adenosylmethionine decarboxylase activity"/>
    <property type="evidence" value="ECO:0007669"/>
    <property type="project" value="UniProtKB-UniRule"/>
</dbReference>
<dbReference type="GO" id="GO:0008295">
    <property type="term" value="P:spermidine biosynthetic process"/>
    <property type="evidence" value="ECO:0007669"/>
    <property type="project" value="UniProtKB-UniRule"/>
</dbReference>
<dbReference type="FunFam" id="3.30.160.750:FF:000004">
    <property type="entry name" value="S-adenosylmethionine decarboxylase proenzyme"/>
    <property type="match status" value="1"/>
</dbReference>
<dbReference type="FunFam" id="3.30.360.110:FF:000001">
    <property type="entry name" value="S-adenosylmethionine decarboxylase proenzyme"/>
    <property type="match status" value="1"/>
</dbReference>
<dbReference type="Gene3D" id="3.30.160.750">
    <property type="match status" value="1"/>
</dbReference>
<dbReference type="Gene3D" id="3.30.360.110">
    <property type="entry name" value="S-adenosylmethionine decarboxylase domain"/>
    <property type="match status" value="1"/>
</dbReference>
<dbReference type="HAMAP" id="MF_00464">
    <property type="entry name" value="AdoMetDC_1"/>
    <property type="match status" value="1"/>
</dbReference>
<dbReference type="InterPro" id="IPR042286">
    <property type="entry name" value="AdoMetDC_C"/>
</dbReference>
<dbReference type="InterPro" id="IPR003826">
    <property type="entry name" value="AdoMetDC_fam_prok"/>
</dbReference>
<dbReference type="InterPro" id="IPR042284">
    <property type="entry name" value="AdoMetDC_N"/>
</dbReference>
<dbReference type="InterPro" id="IPR016067">
    <property type="entry name" value="S-AdoMet_deCO2ase_core"/>
</dbReference>
<dbReference type="InterPro" id="IPR017716">
    <property type="entry name" value="S-AdoMet_deCOase_pro-enz"/>
</dbReference>
<dbReference type="NCBIfam" id="TIGR03330">
    <property type="entry name" value="SAM_DCase_Bsu"/>
    <property type="match status" value="1"/>
</dbReference>
<dbReference type="PANTHER" id="PTHR33866">
    <property type="entry name" value="S-ADENOSYLMETHIONINE DECARBOXYLASE PROENZYME"/>
    <property type="match status" value="1"/>
</dbReference>
<dbReference type="PANTHER" id="PTHR33866:SF2">
    <property type="entry name" value="S-ADENOSYLMETHIONINE DECARBOXYLASE PROENZYME"/>
    <property type="match status" value="1"/>
</dbReference>
<dbReference type="Pfam" id="PF02675">
    <property type="entry name" value="AdoMet_dc"/>
    <property type="match status" value="1"/>
</dbReference>
<dbReference type="SUPFAM" id="SSF56276">
    <property type="entry name" value="S-adenosylmethionine decarboxylase"/>
    <property type="match status" value="1"/>
</dbReference>
<sequence length="130" mass="14832">MKSLGRHIIAEFYDCDKEILDNVEKIEQSMKNAAYETGATLVNSSFHRFLPYGVSGVVVISESHLTIHTWPEYGYAAVDLFTCGDDVDPWKAFTYLKEVLKSQRVHVVEHLRGKYDEIGIPENSPHKMEV</sequence>
<name>SPEH_THEAB</name>
<accession>B7ICX1</accession>
<feature type="chain" id="PRO_1000125463" description="S-adenosylmethionine decarboxylase beta chain" evidence="1">
    <location>
        <begin position="1"/>
        <end position="62"/>
    </location>
</feature>
<feature type="chain" id="PRO_1000125464" description="S-adenosylmethionine decarboxylase alpha chain" evidence="1">
    <location>
        <begin position="63"/>
        <end position="130"/>
    </location>
</feature>
<feature type="active site" description="Schiff-base intermediate with substrate; via pyruvic acid" evidence="1">
    <location>
        <position position="63"/>
    </location>
</feature>
<feature type="active site" description="Proton acceptor; for processing activity" evidence="1">
    <location>
        <position position="68"/>
    </location>
</feature>
<feature type="active site" description="Proton donor; for catalytic activity" evidence="1">
    <location>
        <position position="83"/>
    </location>
</feature>
<feature type="site" description="Cleavage (non-hydrolytic); by autolysis" evidence="1">
    <location>
        <begin position="62"/>
        <end position="63"/>
    </location>
</feature>
<feature type="modified residue" description="Pyruvic acid (Ser); by autocatalysis" evidence="1">
    <location>
        <position position="63"/>
    </location>
</feature>
<organism>
    <name type="scientific">Thermosipho africanus (strain TCF52B)</name>
    <dbReference type="NCBI Taxonomy" id="484019"/>
    <lineage>
        <taxon>Bacteria</taxon>
        <taxon>Thermotogati</taxon>
        <taxon>Thermotogota</taxon>
        <taxon>Thermotogae</taxon>
        <taxon>Thermotogales</taxon>
        <taxon>Fervidobacteriaceae</taxon>
        <taxon>Thermosipho</taxon>
    </lineage>
</organism>
<protein>
    <recommendedName>
        <fullName evidence="1">S-adenosylmethionine decarboxylase proenzyme</fullName>
        <shortName evidence="1">AdoMetDC</shortName>
        <shortName evidence="1">SAMDC</shortName>
        <ecNumber evidence="1">4.1.1.50</ecNumber>
    </recommendedName>
    <component>
        <recommendedName>
            <fullName evidence="1">S-adenosylmethionine decarboxylase beta chain</fullName>
        </recommendedName>
    </component>
    <component>
        <recommendedName>
            <fullName evidence="1">S-adenosylmethionine decarboxylase alpha chain</fullName>
        </recommendedName>
    </component>
</protein>
<proteinExistence type="inferred from homology"/>
<evidence type="ECO:0000255" key="1">
    <source>
        <dbReference type="HAMAP-Rule" id="MF_00464"/>
    </source>
</evidence>
<keyword id="KW-0068">Autocatalytic cleavage</keyword>
<keyword id="KW-0210">Decarboxylase</keyword>
<keyword id="KW-0456">Lyase</keyword>
<keyword id="KW-0620">Polyamine biosynthesis</keyword>
<keyword id="KW-0670">Pyruvate</keyword>
<keyword id="KW-1185">Reference proteome</keyword>
<keyword id="KW-0949">S-adenosyl-L-methionine</keyword>
<keyword id="KW-0704">Schiff base</keyword>
<keyword id="KW-0745">Spermidine biosynthesis</keyword>
<keyword id="KW-0865">Zymogen</keyword>
<comment type="function">
    <text evidence="1">Catalyzes the decarboxylation of S-adenosylmethionine to S-adenosylmethioninamine (dcAdoMet), the propylamine donor required for the synthesis of the polyamines spermine and spermidine from the diamine putrescine.</text>
</comment>
<comment type="catalytic activity">
    <reaction evidence="1">
        <text>S-adenosyl-L-methionine + H(+) = S-adenosyl 3-(methylsulfanyl)propylamine + CO2</text>
        <dbReference type="Rhea" id="RHEA:15981"/>
        <dbReference type="ChEBI" id="CHEBI:15378"/>
        <dbReference type="ChEBI" id="CHEBI:16526"/>
        <dbReference type="ChEBI" id="CHEBI:57443"/>
        <dbReference type="ChEBI" id="CHEBI:59789"/>
        <dbReference type="EC" id="4.1.1.50"/>
    </reaction>
</comment>
<comment type="cofactor">
    <cofactor evidence="1">
        <name>pyruvate</name>
        <dbReference type="ChEBI" id="CHEBI:15361"/>
    </cofactor>
    <text evidence="1">Binds 1 pyruvoyl group covalently per subunit.</text>
</comment>
<comment type="pathway">
    <text evidence="1">Amine and polyamine biosynthesis; S-adenosylmethioninamine biosynthesis; S-adenosylmethioninamine from S-adenosyl-L-methionine: step 1/1.</text>
</comment>
<comment type="subunit">
    <text evidence="1">Heterotetramer of two alpha and two beta chains arranged as a dimer of alpha/beta heterodimers.</text>
</comment>
<comment type="PTM">
    <text evidence="1">Is synthesized initially as an inactive proenzyme. Formation of the active enzyme involves a self-maturation process in which the active site pyruvoyl group is generated from an internal serine residue via an autocatalytic post-translational modification. Two non-identical subunits are generated from the proenzyme in this reaction, and the pyruvate is formed at the N-terminus of the alpha chain, which is derived from the carboxyl end of the proenzyme. The post-translation cleavage follows an unusual pathway, termed non-hydrolytic serinolysis, in which the side chain hydroxyl group of the serine supplies its oxygen atom to form the C-terminus of the beta chain, while the remainder of the serine residue undergoes an oxidative deamination to produce ammonia and the pyruvoyl group blocking the N-terminus of the alpha chain.</text>
</comment>
<comment type="similarity">
    <text evidence="1">Belongs to the prokaryotic AdoMetDC family. Type 1 subfamily.</text>
</comment>
<gene>
    <name evidence="1" type="primary">speH</name>
    <name type="ordered locus">THA_1404</name>
</gene>